<protein>
    <recommendedName>
        <fullName evidence="12">BTB/POZ domain and ankyrin repeat-containing protein NH5.2</fullName>
    </recommendedName>
</protein>
<organism>
    <name type="scientific">Oryza sativa subsp. japonica</name>
    <name type="common">Rice</name>
    <dbReference type="NCBI Taxonomy" id="39947"/>
    <lineage>
        <taxon>Eukaryota</taxon>
        <taxon>Viridiplantae</taxon>
        <taxon>Streptophyta</taxon>
        <taxon>Embryophyta</taxon>
        <taxon>Tracheophyta</taxon>
        <taxon>Spermatophyta</taxon>
        <taxon>Magnoliopsida</taxon>
        <taxon>Liliopsida</taxon>
        <taxon>Poales</taxon>
        <taxon>Poaceae</taxon>
        <taxon>BOP clade</taxon>
        <taxon>Oryzoideae</taxon>
        <taxon>Oryzeae</taxon>
        <taxon>Oryzinae</taxon>
        <taxon>Oryza</taxon>
        <taxon>Oryza sativa</taxon>
    </lineage>
</organism>
<comment type="function">
    <text evidence="1 2 3">May act as a substrate-specific adapter of an E3 ubiquitin-protein ligase complex (CUL3-RBX1-BTB) which mediates the ubiquitination and subsequent proteasomal degradation of target proteins (By similarity). Transcriptional co-regulator involved in the promotion of leaf and floral meristem fate and determinacy (By similarity). Required for the abscission of senescent organs, probably by regulating the cell wall disorganization in abscission zones (AZs, e.g. pulvini at the base of leaves) (By similarity).</text>
</comment>
<comment type="pathway">
    <text evidence="1">Protein modification; protein ubiquitination.</text>
</comment>
<comment type="subunit">
    <text evidence="4 10">Homodimer (By similarity). Interacts with TGAL5, TGAL7, TGAL8 and TGAL9 (PubMed:24919709).</text>
</comment>
<comment type="subcellular location">
    <subcellularLocation>
        <location evidence="5">Nucleus</location>
    </subcellularLocation>
    <subcellularLocation>
        <location evidence="5">Cytoplasm</location>
    </subcellularLocation>
</comment>
<comment type="domain">
    <text evidence="1">The BTB/POZ domain mediates the interaction with some component of ubiquitin ligase complexes.</text>
</comment>
<comment type="similarity">
    <text evidence="12">Belongs to the plant 'ANKYRIN-BTB/POZ' family. 'NOOT-BOP-COCH-like' (NBCL) subfamily.</text>
</comment>
<comment type="sequence caution" evidence="12">
    <conflict type="erroneous gene model prediction">
        <sequence resource="EMBL-CDS" id="BAF29132"/>
    </conflict>
</comment>
<comment type="sequence caution" evidence="12">
    <conflict type="erroneous gene model prediction">
        <sequence resource="EMBL-CDS" id="BAT15819"/>
    </conflict>
</comment>
<keyword id="KW-0040">ANK repeat</keyword>
<keyword id="KW-0963">Cytoplasm</keyword>
<keyword id="KW-0479">Metal-binding</keyword>
<keyword id="KW-0539">Nucleus</keyword>
<keyword id="KW-1185">Reference proteome</keyword>
<keyword id="KW-0677">Repeat</keyword>
<keyword id="KW-0833">Ubl conjugation pathway</keyword>
<keyword id="KW-0862">Zinc</keyword>
<keyword id="KW-0863">Zinc-finger</keyword>
<feature type="chain" id="PRO_0000437005" description="BTB/POZ domain and ankyrin repeat-containing protein NH5.2">
    <location>
        <begin position="1"/>
        <end position="494"/>
    </location>
</feature>
<feature type="domain" description="BTB" evidence="7">
    <location>
        <begin position="25"/>
        <end position="131"/>
    </location>
</feature>
<feature type="repeat" description="ANK 1" evidence="6">
    <location>
        <begin position="275"/>
        <end position="303"/>
    </location>
</feature>
<feature type="repeat" description="ANK 2" evidence="6">
    <location>
        <begin position="304"/>
        <end position="334"/>
    </location>
</feature>
<feature type="repeat" description="ANK 3" evidence="6">
    <location>
        <begin position="339"/>
        <end position="368"/>
    </location>
</feature>
<feature type="repeat" description="ANK 4" evidence="12">
    <location>
        <begin position="372"/>
        <end position="406"/>
    </location>
</feature>
<feature type="zinc finger region" description="C2HC NPR-type" evidence="8">
    <location>
        <begin position="137"/>
        <end position="151"/>
    </location>
</feature>
<feature type="region of interest" description="Disordered" evidence="9">
    <location>
        <begin position="60"/>
        <end position="95"/>
    </location>
</feature>
<feature type="region of interest" description="Disordered" evidence="9">
    <location>
        <begin position="421"/>
        <end position="443"/>
    </location>
</feature>
<feature type="region of interest" description="Disordered" evidence="9">
    <location>
        <begin position="471"/>
        <end position="494"/>
    </location>
</feature>
<feature type="compositionally biased region" description="Pro residues" evidence="9">
    <location>
        <begin position="61"/>
        <end position="72"/>
    </location>
</feature>
<feature type="compositionally biased region" description="Gly residues" evidence="9">
    <location>
        <begin position="76"/>
        <end position="95"/>
    </location>
</feature>
<feature type="binding site" evidence="8">
    <location>
        <position position="140"/>
    </location>
    <ligand>
        <name>Zn(2+)</name>
        <dbReference type="ChEBI" id="CHEBI:29105"/>
    </ligand>
</feature>
<feature type="binding site" evidence="8">
    <location>
        <position position="145"/>
    </location>
    <ligand>
        <name>Zn(2+)</name>
        <dbReference type="ChEBI" id="CHEBI:29105"/>
    </ligand>
</feature>
<feature type="binding site" evidence="8">
    <location>
        <position position="147"/>
    </location>
    <ligand>
        <name>Zn(2+)</name>
        <dbReference type="ChEBI" id="CHEBI:29105"/>
    </ligand>
</feature>
<feature type="binding site" evidence="8">
    <location>
        <position position="150"/>
    </location>
    <ligand>
        <name>Zn(2+)</name>
        <dbReference type="ChEBI" id="CHEBI:29105"/>
    </ligand>
</feature>
<reference key="1">
    <citation type="journal article" date="2005" name="BMC Biol.">
        <title>The sequence of rice chromosomes 11 and 12, rich in disease resistance genes and recent gene duplications.</title>
        <authorList>
            <consortium name="The rice chromosomes 11 and 12 sequencing consortia"/>
        </authorList>
    </citation>
    <scope>NUCLEOTIDE SEQUENCE [LARGE SCALE GENOMIC DNA]</scope>
    <source>
        <strain>cv. Nipponbare</strain>
    </source>
</reference>
<reference key="2">
    <citation type="journal article" date="2005" name="Nature">
        <title>The map-based sequence of the rice genome.</title>
        <authorList>
            <consortium name="International rice genome sequencing project (IRGSP)"/>
        </authorList>
    </citation>
    <scope>NUCLEOTIDE SEQUENCE [LARGE SCALE GENOMIC DNA]</scope>
    <source>
        <strain>cv. Nipponbare</strain>
    </source>
</reference>
<reference key="3">
    <citation type="journal article" date="2008" name="Nucleic Acids Res.">
        <title>The rice annotation project database (RAP-DB): 2008 update.</title>
        <authorList>
            <consortium name="The rice annotation project (RAP)"/>
        </authorList>
    </citation>
    <scope>GENOME REANNOTATION</scope>
    <source>
        <strain>cv. Nipponbare</strain>
    </source>
</reference>
<reference key="4">
    <citation type="journal article" date="2013" name="Rice">
        <title>Improvement of the Oryza sativa Nipponbare reference genome using next generation sequence and optical map data.</title>
        <authorList>
            <person name="Kawahara Y."/>
            <person name="de la Bastide M."/>
            <person name="Hamilton J.P."/>
            <person name="Kanamori H."/>
            <person name="McCombie W.R."/>
            <person name="Ouyang S."/>
            <person name="Schwartz D.C."/>
            <person name="Tanaka T."/>
            <person name="Wu J."/>
            <person name="Zhou S."/>
            <person name="Childs K.L."/>
            <person name="Davidson R.M."/>
            <person name="Lin H."/>
            <person name="Quesada-Ocampo L."/>
            <person name="Vaillancourt B."/>
            <person name="Sakai H."/>
            <person name="Lee S.S."/>
            <person name="Kim J."/>
            <person name="Numa H."/>
            <person name="Itoh T."/>
            <person name="Buell C.R."/>
            <person name="Matsumoto T."/>
        </authorList>
    </citation>
    <scope>GENOME REANNOTATION</scope>
    <source>
        <strain>cv. Nipponbare</strain>
    </source>
</reference>
<reference key="5">
    <citation type="journal article" date="2014" name="BMC Genomics">
        <title>Interaction specificity and coexpression of rice NPR1 homologs 1 and 3 (NH1 and NH3), TGA transcription factors and negative regulator of resistance (NRR) proteins.</title>
        <authorList>
            <person name="Chern M."/>
            <person name="Bai W."/>
            <person name="Ruan D."/>
            <person name="Oh T."/>
            <person name="Chen X."/>
            <person name="Ronald P.C."/>
        </authorList>
    </citation>
    <scope>INTERACTION WITH TGAL5; TGAL7; TGAL8 AND TGAL11</scope>
</reference>
<dbReference type="EMBL" id="DP000011">
    <property type="protein sequence ID" value="ABA95778.1"/>
    <property type="molecule type" value="Genomic_DNA"/>
</dbReference>
<dbReference type="EMBL" id="AP008218">
    <property type="protein sequence ID" value="BAF29132.2"/>
    <property type="status" value="ALT_SEQ"/>
    <property type="molecule type" value="Genomic_DNA"/>
</dbReference>
<dbReference type="EMBL" id="AP014968">
    <property type="protein sequence ID" value="BAT15819.1"/>
    <property type="status" value="ALT_SEQ"/>
    <property type="molecule type" value="Genomic_DNA"/>
</dbReference>
<dbReference type="RefSeq" id="XP_015619624.1">
    <property type="nucleotide sequence ID" value="XM_015764138.1"/>
</dbReference>
<dbReference type="SMR" id="Q2QXZ2"/>
<dbReference type="STRING" id="39947.Q2QXZ2"/>
<dbReference type="PaxDb" id="39947-Q2QXZ2"/>
<dbReference type="EnsemblPlants" id="Os12t0138500-02">
    <property type="protein sequence ID" value="Os12t0138500-02"/>
    <property type="gene ID" value="Os12g0138500"/>
</dbReference>
<dbReference type="Gramene" id="Os12t0138500-02">
    <property type="protein sequence ID" value="Os12t0138500-02"/>
    <property type="gene ID" value="Os12g0138500"/>
</dbReference>
<dbReference type="KEGG" id="dosa:Os12g0138500"/>
<dbReference type="InParanoid" id="Q2QXZ2"/>
<dbReference type="OrthoDB" id="619508at2759"/>
<dbReference type="PlantReactome" id="R-OSA-9826782">
    <property type="pathway name" value="Regulation of seed germination and coleoptile growth under submergence and normal gravity environment"/>
</dbReference>
<dbReference type="UniPathway" id="UPA00143"/>
<dbReference type="Proteomes" id="UP000000763">
    <property type="component" value="Chromosome 12"/>
</dbReference>
<dbReference type="Proteomes" id="UP000059680">
    <property type="component" value="Chromosome 12"/>
</dbReference>
<dbReference type="GO" id="GO:0005737">
    <property type="term" value="C:cytoplasm"/>
    <property type="evidence" value="ECO:0007669"/>
    <property type="project" value="UniProtKB-SubCell"/>
</dbReference>
<dbReference type="GO" id="GO:0005634">
    <property type="term" value="C:nucleus"/>
    <property type="evidence" value="ECO:0000318"/>
    <property type="project" value="GO_Central"/>
</dbReference>
<dbReference type="GO" id="GO:0000976">
    <property type="term" value="F:transcription cis-regulatory region binding"/>
    <property type="evidence" value="ECO:0000318"/>
    <property type="project" value="GO_Central"/>
</dbReference>
<dbReference type="GO" id="GO:0008270">
    <property type="term" value="F:zinc ion binding"/>
    <property type="evidence" value="ECO:0007669"/>
    <property type="project" value="UniProtKB-KW"/>
</dbReference>
<dbReference type="GO" id="GO:0009864">
    <property type="term" value="P:induced systemic resistance, jasmonic acid mediated signaling pathway"/>
    <property type="evidence" value="ECO:0000318"/>
    <property type="project" value="GO_Central"/>
</dbReference>
<dbReference type="GO" id="GO:0099402">
    <property type="term" value="P:plant organ development"/>
    <property type="evidence" value="ECO:0007669"/>
    <property type="project" value="InterPro"/>
</dbReference>
<dbReference type="GO" id="GO:0006355">
    <property type="term" value="P:regulation of DNA-templated transcription"/>
    <property type="evidence" value="ECO:0000318"/>
    <property type="project" value="GO_Central"/>
</dbReference>
<dbReference type="FunFam" id="1.25.40.20:FF:000647">
    <property type="entry name" value="BTB/POZ domain and ankyrin repeat-containing protein NH5.2"/>
    <property type="match status" value="1"/>
</dbReference>
<dbReference type="FunFam" id="3.30.710.10:FF:000132">
    <property type="entry name" value="BTB/POZ domain and ankyrin repeat-containing protein NH5.2"/>
    <property type="match status" value="1"/>
</dbReference>
<dbReference type="Gene3D" id="1.25.40.20">
    <property type="entry name" value="Ankyrin repeat-containing domain"/>
    <property type="match status" value="1"/>
</dbReference>
<dbReference type="Gene3D" id="3.30.710.10">
    <property type="entry name" value="Potassium Channel Kv1.1, Chain A"/>
    <property type="match status" value="1"/>
</dbReference>
<dbReference type="InterPro" id="IPR002110">
    <property type="entry name" value="Ankyrin_rpt"/>
</dbReference>
<dbReference type="InterPro" id="IPR036770">
    <property type="entry name" value="Ankyrin_rpt-contain_sf"/>
</dbReference>
<dbReference type="InterPro" id="IPR000210">
    <property type="entry name" value="BTB/POZ_dom"/>
</dbReference>
<dbReference type="InterPro" id="IPR044284">
    <property type="entry name" value="NPR5/6"/>
</dbReference>
<dbReference type="InterPro" id="IPR024228">
    <property type="entry name" value="NPR_central_dom"/>
</dbReference>
<dbReference type="InterPro" id="IPR011333">
    <property type="entry name" value="SKP1/BTB/POZ_sf"/>
</dbReference>
<dbReference type="PANTHER" id="PTHR46668">
    <property type="entry name" value="BTB/POZ DOMAIN AND ANKYRIN REPEAT-CONTAINING PROTEIN NH5.2"/>
    <property type="match status" value="1"/>
</dbReference>
<dbReference type="PANTHER" id="PTHR46668:SF2">
    <property type="entry name" value="BTB_POZ DOMAIN AND ANKYRIN REPEAT-CONTAINING PROTEIN NH5.1"/>
    <property type="match status" value="1"/>
</dbReference>
<dbReference type="Pfam" id="PF12796">
    <property type="entry name" value="Ank_2"/>
    <property type="match status" value="1"/>
</dbReference>
<dbReference type="Pfam" id="PF00651">
    <property type="entry name" value="BTB"/>
    <property type="match status" value="1"/>
</dbReference>
<dbReference type="Pfam" id="PF11900">
    <property type="entry name" value="DUF3420"/>
    <property type="match status" value="1"/>
</dbReference>
<dbReference type="SMART" id="SM00248">
    <property type="entry name" value="ANK"/>
    <property type="match status" value="2"/>
</dbReference>
<dbReference type="SMART" id="SM00225">
    <property type="entry name" value="BTB"/>
    <property type="match status" value="1"/>
</dbReference>
<dbReference type="SUPFAM" id="SSF48403">
    <property type="entry name" value="Ankyrin repeat"/>
    <property type="match status" value="1"/>
</dbReference>
<dbReference type="SUPFAM" id="SSF54695">
    <property type="entry name" value="POZ domain"/>
    <property type="match status" value="1"/>
</dbReference>
<dbReference type="PROSITE" id="PS50297">
    <property type="entry name" value="ANK_REP_REGION"/>
    <property type="match status" value="1"/>
</dbReference>
<dbReference type="PROSITE" id="PS50088">
    <property type="entry name" value="ANK_REPEAT"/>
    <property type="match status" value="1"/>
</dbReference>
<dbReference type="PROSITE" id="PS50097">
    <property type="entry name" value="BTB"/>
    <property type="match status" value="1"/>
</dbReference>
<dbReference type="PROSITE" id="PS52046">
    <property type="entry name" value="ZF_C2HC_NPR"/>
    <property type="match status" value="1"/>
</dbReference>
<evidence type="ECO:0000250" key="1">
    <source>
        <dbReference type="UniProtKB" id="O22286"/>
    </source>
</evidence>
<evidence type="ECO:0000250" key="2">
    <source>
        <dbReference type="UniProtKB" id="Q2HW56"/>
    </source>
</evidence>
<evidence type="ECO:0000250" key="3">
    <source>
        <dbReference type="UniProtKB" id="Q9FDY4"/>
    </source>
</evidence>
<evidence type="ECO:0000250" key="4">
    <source>
        <dbReference type="UniProtKB" id="Q9ZVC2"/>
    </source>
</evidence>
<evidence type="ECO:0000250" key="5">
    <source>
        <dbReference type="UniProtKB" id="S4VGD0"/>
    </source>
</evidence>
<evidence type="ECO:0000255" key="6"/>
<evidence type="ECO:0000255" key="7">
    <source>
        <dbReference type="PROSITE-ProRule" id="PRU00037"/>
    </source>
</evidence>
<evidence type="ECO:0000255" key="8">
    <source>
        <dbReference type="PROSITE-ProRule" id="PRU01391"/>
    </source>
</evidence>
<evidence type="ECO:0000256" key="9">
    <source>
        <dbReference type="SAM" id="MobiDB-lite"/>
    </source>
</evidence>
<evidence type="ECO:0000269" key="10">
    <source>
    </source>
</evidence>
<evidence type="ECO:0000303" key="11">
    <source>
    </source>
</evidence>
<evidence type="ECO:0000305" key="12"/>
<evidence type="ECO:0000312" key="13">
    <source>
        <dbReference type="EMBL" id="ABA95778.1"/>
    </source>
</evidence>
<evidence type="ECO:0000312" key="14">
    <source>
        <dbReference type="EMBL" id="BAT15819.1"/>
    </source>
</evidence>
<sequence>MSSEDSLKSLSLDYLNLLINGQAFSDVAFSVEGRLVHAHRCVLAARSLFFRKLFCGLDPNHQPPPPPPPPLNWPTAGGGGGGSGGGGRGGAGGGGGAPATPELVIPVSSIRYEVLVLVLQFLYSGQASVAAPKSGPLPGCGARGCWHTRCGAAVDLALDTLAAARSFGVEQLALLVQKQLESMVKEASVDDVMKVLMASRKFEMQELWATCSHLVARSGLSADLLAKHLPIDVVAKIEEIRAKSPLAAAAAPRSPFLTHHYLPMNPASSAADRDNKIRRMRRALDAADIELVKLMVMGEGLDLDDALAVHYAVQHCNRDVVKALLELGAADVNSRAGPTGKTALHLAAEMVSPDMVSVLLDHHADPNSRTLDGVTPLDVLRSLTSEFLFKGAVPGLTHIEPNKLRLCLELVQSAVMVTTRDDGAPVTGGEAGGSDGGNFPRSDADDSLVSLTMNSTLMYQGQEMAAAVAAGEGRKSNNGRGSPPPAMYFPNGFA</sequence>
<gene>
    <name evidence="12" type="primary">NH5.2</name>
    <name evidence="11" type="synonym">NH5</name>
    <name evidence="14" type="ordered locus">Os12g0138500</name>
    <name evidence="13" type="ordered locus">LOC_Os12g04410</name>
</gene>
<accession>Q2QXZ2</accession>
<accession>A0A0P0Y6T3</accession>
<accession>Q0IQ83</accession>
<proteinExistence type="evidence at protein level"/>
<name>NH52_ORYSJ</name>